<evidence type="ECO:0000255" key="1">
    <source>
        <dbReference type="HAMAP-Rule" id="MF_00082"/>
    </source>
</evidence>
<feature type="chain" id="PRO_0000335670" description="Acetylglutamate kinase">
    <location>
        <begin position="1"/>
        <end position="293"/>
    </location>
</feature>
<feature type="binding site" evidence="1">
    <location>
        <begin position="71"/>
        <end position="72"/>
    </location>
    <ligand>
        <name>substrate</name>
    </ligand>
</feature>
<feature type="binding site" evidence="1">
    <location>
        <position position="93"/>
    </location>
    <ligand>
        <name>substrate</name>
    </ligand>
</feature>
<feature type="binding site" evidence="1">
    <location>
        <position position="186"/>
    </location>
    <ligand>
        <name>substrate</name>
    </ligand>
</feature>
<feature type="site" description="Transition state stabilizer" evidence="1">
    <location>
        <position position="36"/>
    </location>
</feature>
<feature type="site" description="Transition state stabilizer" evidence="1">
    <location>
        <position position="249"/>
    </location>
</feature>
<reference key="1">
    <citation type="submission" date="2006-05" db="EMBL/GenBank/DDBJ databases">
        <authorList>
            <consortium name="Genoscope"/>
        </authorList>
    </citation>
    <scope>NUCLEOTIDE SEQUENCE [LARGE SCALE GENOMIC DNA]</scope>
    <source>
        <strain>WH7803</strain>
    </source>
</reference>
<keyword id="KW-0028">Amino-acid biosynthesis</keyword>
<keyword id="KW-0055">Arginine biosynthesis</keyword>
<keyword id="KW-0067">ATP-binding</keyword>
<keyword id="KW-0963">Cytoplasm</keyword>
<keyword id="KW-0418">Kinase</keyword>
<keyword id="KW-0547">Nucleotide-binding</keyword>
<keyword id="KW-1185">Reference proteome</keyword>
<keyword id="KW-0808">Transferase</keyword>
<protein>
    <recommendedName>
        <fullName evidence="1">Acetylglutamate kinase</fullName>
        <ecNumber evidence="1">2.7.2.8</ecNumber>
    </recommendedName>
    <alternativeName>
        <fullName evidence="1">N-acetyl-L-glutamate 5-phosphotransferase</fullName>
    </alternativeName>
    <alternativeName>
        <fullName evidence="1">NAG kinase</fullName>
        <shortName evidence="1">NAGK</shortName>
    </alternativeName>
</protein>
<comment type="function">
    <text evidence="1">Catalyzes the ATP-dependent phosphorylation of N-acetyl-L-glutamate.</text>
</comment>
<comment type="catalytic activity">
    <reaction evidence="1">
        <text>N-acetyl-L-glutamate + ATP = N-acetyl-L-glutamyl 5-phosphate + ADP</text>
        <dbReference type="Rhea" id="RHEA:14629"/>
        <dbReference type="ChEBI" id="CHEBI:30616"/>
        <dbReference type="ChEBI" id="CHEBI:44337"/>
        <dbReference type="ChEBI" id="CHEBI:57936"/>
        <dbReference type="ChEBI" id="CHEBI:456216"/>
        <dbReference type="EC" id="2.7.2.8"/>
    </reaction>
</comment>
<comment type="pathway">
    <text evidence="1">Amino-acid biosynthesis; L-arginine biosynthesis; N(2)-acetyl-L-ornithine from L-glutamate: step 2/4.</text>
</comment>
<comment type="subcellular location">
    <subcellularLocation>
        <location evidence="1">Cytoplasm</location>
    </subcellularLocation>
</comment>
<comment type="similarity">
    <text evidence="1">Belongs to the acetylglutamate kinase family. ArgB subfamily.</text>
</comment>
<sequence length="293" mass="31058">MVSPDHEPMDDALRVSVLSEALPYIQRFAGRRIVVKYGGAAMVHAELQSAVFRDLALLRSVGVQPVVVHGGGPEINHWLKRLDIDPEFREGLRVTDAATMDVVEMVLVGRVNKQIVNGLNRLGARAVGLSGSDGCLVEARAWGDGSHGLVGDVARVNPDVLEPLLDRGYVPVISSVAANAEGVAHNINADTVAGELAAALEAEKLILLTDTPGILRDRESPESLIRQLKLSEARQLIDDGIVAGGMTPKTECCIRALAQGVSAAHIVDGRVAHALLLEVFTDAGIGTMVLGRS</sequence>
<proteinExistence type="inferred from homology"/>
<accession>A5GJC5</accession>
<dbReference type="EC" id="2.7.2.8" evidence="1"/>
<dbReference type="EMBL" id="CT971583">
    <property type="protein sequence ID" value="CAK23040.1"/>
    <property type="molecule type" value="Genomic_DNA"/>
</dbReference>
<dbReference type="SMR" id="A5GJC5"/>
<dbReference type="STRING" id="32051.SynWH7803_0614"/>
<dbReference type="KEGG" id="syx:SynWH7803_0614"/>
<dbReference type="eggNOG" id="COG0548">
    <property type="taxonomic scope" value="Bacteria"/>
</dbReference>
<dbReference type="HOGENOM" id="CLU_053680_0_1_3"/>
<dbReference type="OrthoDB" id="9803155at2"/>
<dbReference type="UniPathway" id="UPA00068">
    <property type="reaction ID" value="UER00107"/>
</dbReference>
<dbReference type="Proteomes" id="UP000001566">
    <property type="component" value="Chromosome"/>
</dbReference>
<dbReference type="GO" id="GO:0005737">
    <property type="term" value="C:cytoplasm"/>
    <property type="evidence" value="ECO:0007669"/>
    <property type="project" value="UniProtKB-SubCell"/>
</dbReference>
<dbReference type="GO" id="GO:0003991">
    <property type="term" value="F:acetylglutamate kinase activity"/>
    <property type="evidence" value="ECO:0007669"/>
    <property type="project" value="UniProtKB-UniRule"/>
</dbReference>
<dbReference type="GO" id="GO:0005524">
    <property type="term" value="F:ATP binding"/>
    <property type="evidence" value="ECO:0007669"/>
    <property type="project" value="UniProtKB-UniRule"/>
</dbReference>
<dbReference type="GO" id="GO:0042450">
    <property type="term" value="P:arginine biosynthetic process via ornithine"/>
    <property type="evidence" value="ECO:0007669"/>
    <property type="project" value="UniProtKB-UniRule"/>
</dbReference>
<dbReference type="GO" id="GO:0006526">
    <property type="term" value="P:L-arginine biosynthetic process"/>
    <property type="evidence" value="ECO:0007669"/>
    <property type="project" value="UniProtKB-UniPathway"/>
</dbReference>
<dbReference type="CDD" id="cd04250">
    <property type="entry name" value="AAK_NAGK-C"/>
    <property type="match status" value="1"/>
</dbReference>
<dbReference type="FunFam" id="3.40.1160.10:FF:000004">
    <property type="entry name" value="Acetylglutamate kinase"/>
    <property type="match status" value="1"/>
</dbReference>
<dbReference type="Gene3D" id="3.40.1160.10">
    <property type="entry name" value="Acetylglutamate kinase-like"/>
    <property type="match status" value="1"/>
</dbReference>
<dbReference type="HAMAP" id="MF_00082">
    <property type="entry name" value="ArgB"/>
    <property type="match status" value="1"/>
</dbReference>
<dbReference type="InterPro" id="IPR036393">
    <property type="entry name" value="AceGlu_kinase-like_sf"/>
</dbReference>
<dbReference type="InterPro" id="IPR004662">
    <property type="entry name" value="AcgluKinase_fam"/>
</dbReference>
<dbReference type="InterPro" id="IPR037528">
    <property type="entry name" value="ArgB"/>
</dbReference>
<dbReference type="InterPro" id="IPR001048">
    <property type="entry name" value="Asp/Glu/Uridylate_kinase"/>
</dbReference>
<dbReference type="InterPro" id="IPR001057">
    <property type="entry name" value="Glu/AcGlu_kinase"/>
</dbReference>
<dbReference type="InterPro" id="IPR041727">
    <property type="entry name" value="NAGK-C"/>
</dbReference>
<dbReference type="NCBIfam" id="TIGR00761">
    <property type="entry name" value="argB"/>
    <property type="match status" value="1"/>
</dbReference>
<dbReference type="PANTHER" id="PTHR23342">
    <property type="entry name" value="N-ACETYLGLUTAMATE SYNTHASE"/>
    <property type="match status" value="1"/>
</dbReference>
<dbReference type="PANTHER" id="PTHR23342:SF0">
    <property type="entry name" value="N-ACETYLGLUTAMATE SYNTHASE, MITOCHONDRIAL"/>
    <property type="match status" value="1"/>
</dbReference>
<dbReference type="Pfam" id="PF00696">
    <property type="entry name" value="AA_kinase"/>
    <property type="match status" value="1"/>
</dbReference>
<dbReference type="PIRSF" id="PIRSF000728">
    <property type="entry name" value="NAGK"/>
    <property type="match status" value="1"/>
</dbReference>
<dbReference type="PRINTS" id="PR00474">
    <property type="entry name" value="GLU5KINASE"/>
</dbReference>
<dbReference type="SUPFAM" id="SSF53633">
    <property type="entry name" value="Carbamate kinase-like"/>
    <property type="match status" value="1"/>
</dbReference>
<name>ARGB_SYNPW</name>
<organism>
    <name type="scientific">Synechococcus sp. (strain WH7803)</name>
    <dbReference type="NCBI Taxonomy" id="32051"/>
    <lineage>
        <taxon>Bacteria</taxon>
        <taxon>Bacillati</taxon>
        <taxon>Cyanobacteriota</taxon>
        <taxon>Cyanophyceae</taxon>
        <taxon>Synechococcales</taxon>
        <taxon>Synechococcaceae</taxon>
        <taxon>Synechococcus</taxon>
    </lineage>
</organism>
<gene>
    <name evidence="1" type="primary">argB</name>
    <name type="ordered locus">SynWH7803_0614</name>
</gene>